<comment type="function">
    <text evidence="1">Catalyzes the attachment of threonine to tRNA(Thr) in a two-step reaction: L-threonine is first activated by ATP to form Thr-AMP and then transferred to the acceptor end of tRNA(Thr). Also edits incorrectly charged L-seryl-tRNA(Thr).</text>
</comment>
<comment type="catalytic activity">
    <reaction evidence="1">
        <text>tRNA(Thr) + L-threonine + ATP = L-threonyl-tRNA(Thr) + AMP + diphosphate + H(+)</text>
        <dbReference type="Rhea" id="RHEA:24624"/>
        <dbReference type="Rhea" id="RHEA-COMP:9670"/>
        <dbReference type="Rhea" id="RHEA-COMP:9704"/>
        <dbReference type="ChEBI" id="CHEBI:15378"/>
        <dbReference type="ChEBI" id="CHEBI:30616"/>
        <dbReference type="ChEBI" id="CHEBI:33019"/>
        <dbReference type="ChEBI" id="CHEBI:57926"/>
        <dbReference type="ChEBI" id="CHEBI:78442"/>
        <dbReference type="ChEBI" id="CHEBI:78534"/>
        <dbReference type="ChEBI" id="CHEBI:456215"/>
        <dbReference type="EC" id="6.1.1.3"/>
    </reaction>
</comment>
<comment type="cofactor">
    <cofactor evidence="1">
        <name>Zn(2+)</name>
        <dbReference type="ChEBI" id="CHEBI:29105"/>
    </cofactor>
    <text evidence="1">Binds 1 zinc ion per subunit.</text>
</comment>
<comment type="subunit">
    <text evidence="1">Homodimer.</text>
</comment>
<comment type="subcellular location">
    <subcellularLocation>
        <location evidence="1">Cytoplasm</location>
    </subcellularLocation>
</comment>
<comment type="domain">
    <text evidence="1">The N-terminal domain is an archaea-specific tRNA-editing domain that hydrolyzes incorrectly charged L-seryl-tRNA(Thr). Catalysis of tRNA editing is performed by the charged tRNA itself.</text>
</comment>
<comment type="similarity">
    <text evidence="1">Belongs to the class-II aminoacyl-tRNA synthetase family.</text>
</comment>
<organism>
    <name type="scientific">Staphylothermus marinus (strain ATCC 43588 / DSM 3639 / JCM 9404 / F1)</name>
    <dbReference type="NCBI Taxonomy" id="399550"/>
    <lineage>
        <taxon>Archaea</taxon>
        <taxon>Thermoproteota</taxon>
        <taxon>Thermoprotei</taxon>
        <taxon>Desulfurococcales</taxon>
        <taxon>Desulfurococcaceae</taxon>
        <taxon>Staphylothermus</taxon>
    </lineage>
</organism>
<reference key="1">
    <citation type="journal article" date="2009" name="BMC Genomics">
        <title>The complete genome sequence of Staphylothermus marinus reveals differences in sulfur metabolism among heterotrophic Crenarchaeota.</title>
        <authorList>
            <person name="Anderson I.J."/>
            <person name="Dharmarajan L."/>
            <person name="Rodriguez J."/>
            <person name="Hooper S."/>
            <person name="Porat I."/>
            <person name="Ulrich L.E."/>
            <person name="Elkins J.G."/>
            <person name="Mavromatis K."/>
            <person name="Sun H."/>
            <person name="Land M."/>
            <person name="Lapidus A."/>
            <person name="Lucas S."/>
            <person name="Barry K."/>
            <person name="Huber H."/>
            <person name="Zhulin I.B."/>
            <person name="Whitman W.B."/>
            <person name="Mukhopadhyay B."/>
            <person name="Woese C."/>
            <person name="Bristow J."/>
            <person name="Kyrpides N."/>
        </authorList>
    </citation>
    <scope>NUCLEOTIDE SEQUENCE [LARGE SCALE GENOMIC DNA]</scope>
    <source>
        <strain>ATCC 43588 / DSM 3639 / JCM 9404 / F1</strain>
    </source>
</reference>
<reference key="2">
    <citation type="journal article" date="2009" name="Stand. Genomic Sci.">
        <title>Complete genome sequence of Staphylothermus marinus Stetter and Fiala 1986 type strain F1.</title>
        <authorList>
            <person name="Anderson I.J."/>
            <person name="Sun H."/>
            <person name="Lapidus A."/>
            <person name="Copeland A."/>
            <person name="Glavina Del Rio T."/>
            <person name="Tice H."/>
            <person name="Dalin E."/>
            <person name="Lucas S."/>
            <person name="Barry K."/>
            <person name="Land M."/>
            <person name="Richardson P."/>
            <person name="Huber H."/>
            <person name="Kyrpides N.C."/>
        </authorList>
    </citation>
    <scope>NUCLEOTIDE SEQUENCE [LARGE SCALE GENOMIC DNA]</scope>
    <source>
        <strain>ATCC 43588 / DSM 3639 / JCM 9404 / F1</strain>
    </source>
</reference>
<keyword id="KW-0030">Aminoacyl-tRNA synthetase</keyword>
<keyword id="KW-0067">ATP-binding</keyword>
<keyword id="KW-0963">Cytoplasm</keyword>
<keyword id="KW-0436">Ligase</keyword>
<keyword id="KW-0479">Metal-binding</keyword>
<keyword id="KW-0547">Nucleotide-binding</keyword>
<keyword id="KW-0648">Protein biosynthesis</keyword>
<keyword id="KW-1185">Reference proteome</keyword>
<keyword id="KW-0694">RNA-binding</keyword>
<keyword id="KW-0820">tRNA-binding</keyword>
<keyword id="KW-0862">Zinc</keyword>
<protein>
    <recommendedName>
        <fullName evidence="1">Threonine--tRNA ligase</fullName>
        <ecNumber evidence="1">6.1.1.3</ecNumber>
    </recommendedName>
    <alternativeName>
        <fullName evidence="1">Threonyl-tRNA synthetase</fullName>
        <shortName evidence="1">ThrRS</shortName>
    </alternativeName>
</protein>
<name>SYT_STAMF</name>
<accession>A3DN67</accession>
<dbReference type="EC" id="6.1.1.3" evidence="1"/>
<dbReference type="EMBL" id="CP000575">
    <property type="protein sequence ID" value="ABN70077.1"/>
    <property type="molecule type" value="Genomic_DNA"/>
</dbReference>
<dbReference type="RefSeq" id="WP_011839268.1">
    <property type="nucleotide sequence ID" value="NC_009033.1"/>
</dbReference>
<dbReference type="SMR" id="A3DN67"/>
<dbReference type="STRING" id="399550.Smar_0978"/>
<dbReference type="GeneID" id="4907870"/>
<dbReference type="KEGG" id="smr:Smar_0978"/>
<dbReference type="eggNOG" id="arCOG00401">
    <property type="taxonomic scope" value="Archaea"/>
</dbReference>
<dbReference type="HOGENOM" id="CLU_029833_0_0_2"/>
<dbReference type="OrthoDB" id="372136at2157"/>
<dbReference type="Proteomes" id="UP000000254">
    <property type="component" value="Chromosome"/>
</dbReference>
<dbReference type="GO" id="GO:0005737">
    <property type="term" value="C:cytoplasm"/>
    <property type="evidence" value="ECO:0007669"/>
    <property type="project" value="UniProtKB-SubCell"/>
</dbReference>
<dbReference type="GO" id="GO:0005524">
    <property type="term" value="F:ATP binding"/>
    <property type="evidence" value="ECO:0007669"/>
    <property type="project" value="UniProtKB-UniRule"/>
</dbReference>
<dbReference type="GO" id="GO:0004829">
    <property type="term" value="F:threonine-tRNA ligase activity"/>
    <property type="evidence" value="ECO:0007669"/>
    <property type="project" value="UniProtKB-UniRule"/>
</dbReference>
<dbReference type="GO" id="GO:0000049">
    <property type="term" value="F:tRNA binding"/>
    <property type="evidence" value="ECO:0007669"/>
    <property type="project" value="UniProtKB-KW"/>
</dbReference>
<dbReference type="GO" id="GO:0008270">
    <property type="term" value="F:zinc ion binding"/>
    <property type="evidence" value="ECO:0007669"/>
    <property type="project" value="InterPro"/>
</dbReference>
<dbReference type="GO" id="GO:0006435">
    <property type="term" value="P:threonyl-tRNA aminoacylation"/>
    <property type="evidence" value="ECO:0007669"/>
    <property type="project" value="UniProtKB-UniRule"/>
</dbReference>
<dbReference type="CDD" id="cd00860">
    <property type="entry name" value="ThrRS_anticodon"/>
    <property type="match status" value="1"/>
</dbReference>
<dbReference type="FunFam" id="3.40.50.800:FF:000001">
    <property type="entry name" value="Threonine--tRNA ligase"/>
    <property type="match status" value="1"/>
</dbReference>
<dbReference type="Gene3D" id="3.40.50.800">
    <property type="entry name" value="Anticodon-binding domain"/>
    <property type="match status" value="1"/>
</dbReference>
<dbReference type="Gene3D" id="3.30.930.10">
    <property type="entry name" value="Bira Bifunctional Protein, Domain 2"/>
    <property type="match status" value="1"/>
</dbReference>
<dbReference type="Gene3D" id="3.50.80.10">
    <property type="entry name" value="D-tyrosyl-tRNA(Tyr) deacylase"/>
    <property type="match status" value="1"/>
</dbReference>
<dbReference type="HAMAP" id="MF_00184">
    <property type="entry name" value="Thr_tRNA_synth"/>
    <property type="match status" value="1"/>
</dbReference>
<dbReference type="InterPro" id="IPR002314">
    <property type="entry name" value="aa-tRNA-synt_IIb"/>
</dbReference>
<dbReference type="InterPro" id="IPR006195">
    <property type="entry name" value="aa-tRNA-synth_II"/>
</dbReference>
<dbReference type="InterPro" id="IPR045864">
    <property type="entry name" value="aa-tRNA-synth_II/BPL/LPL"/>
</dbReference>
<dbReference type="InterPro" id="IPR004154">
    <property type="entry name" value="Anticodon-bd"/>
</dbReference>
<dbReference type="InterPro" id="IPR036621">
    <property type="entry name" value="Anticodon-bd_dom_sf"/>
</dbReference>
<dbReference type="InterPro" id="IPR023509">
    <property type="entry name" value="DTD-like_sf"/>
</dbReference>
<dbReference type="InterPro" id="IPR002320">
    <property type="entry name" value="Thr-tRNA-ligase_IIa"/>
</dbReference>
<dbReference type="InterPro" id="IPR015011">
    <property type="entry name" value="Threonyl-tRNA_syn_edit_dom_arc"/>
</dbReference>
<dbReference type="InterPro" id="IPR047246">
    <property type="entry name" value="ThrRS_anticodon"/>
</dbReference>
<dbReference type="NCBIfam" id="NF003068">
    <property type="entry name" value="PRK03991.1"/>
    <property type="match status" value="1"/>
</dbReference>
<dbReference type="PANTHER" id="PTHR11451:SF44">
    <property type="entry name" value="THREONINE--TRNA LIGASE, CHLOROPLASTIC_MITOCHONDRIAL 2"/>
    <property type="match status" value="1"/>
</dbReference>
<dbReference type="PANTHER" id="PTHR11451">
    <property type="entry name" value="THREONINE-TRNA LIGASE"/>
    <property type="match status" value="1"/>
</dbReference>
<dbReference type="Pfam" id="PF03129">
    <property type="entry name" value="HGTP_anticodon"/>
    <property type="match status" value="1"/>
</dbReference>
<dbReference type="Pfam" id="PF00587">
    <property type="entry name" value="tRNA-synt_2b"/>
    <property type="match status" value="1"/>
</dbReference>
<dbReference type="Pfam" id="PF08915">
    <property type="entry name" value="tRNA-Thr_ED"/>
    <property type="match status" value="1"/>
</dbReference>
<dbReference type="PRINTS" id="PR01047">
    <property type="entry name" value="TRNASYNTHTHR"/>
</dbReference>
<dbReference type="SUPFAM" id="SSF52954">
    <property type="entry name" value="Class II aaRS ABD-related"/>
    <property type="match status" value="1"/>
</dbReference>
<dbReference type="SUPFAM" id="SSF55681">
    <property type="entry name" value="Class II aaRS and biotin synthetases"/>
    <property type="match status" value="1"/>
</dbReference>
<dbReference type="PROSITE" id="PS50862">
    <property type="entry name" value="AA_TRNA_LIGASE_II"/>
    <property type="match status" value="1"/>
</dbReference>
<proteinExistence type="inferred from homology"/>
<gene>
    <name evidence="1" type="primary">thrS</name>
    <name type="ordered locus">Smar_0978</name>
</gene>
<sequence length="614" mass="71876">MRILTIHARKFHYKALSQALDKPEELTNENKEGFFENVLVVFTSVEEGDNEKVVEKAVTEILDIANRVKPKTILLYPYAHLSSDLASPSQALEIMKLLEQKLRGKTDLEVYRAPFGWYKEFMLDCYGHPLSELSKTIRITGGGEVVRRELKKEFYILTPDGKVYDPEKFNYDKYPDLKILVDKEVFGKELPGGVNRVNDYCRKFGFEWEPMSDHGHMRYGPHAVIIMESIMQYSWNIVRSLGIPVYKVMGTNMFNLSEKPVLEHALLFGDRLYELKVDNEKFVLRYAACHQQFAMLRDWIISYKNLPFGMFEVADSYRLEQRGELNLCFRLRKFYMPDLHILNRDLNEAIKISRIVQDKILEEIAKIGRKYVALYNVTSDFFDKYRDILIEFVRRENYPVLVSVIPSGIYYWVLNVEYHIIDNLNRPREIATFQIDIGNGERFNITYTDEKGEKHHPVIIHTAIIGGIERFIYTIFDTAALMEKEGKTPYIPTWLAPVQVRIIPIKNEYLDYAEKVAEKIENAGFRVDIDDRGESLGKKIRDAGREWIPYIVVIGEREVRSNTINVRIRRTNDQKVMVTDELIRILEEETKNYPRVSLTMPKYLSKRPIPSYHA</sequence>
<feature type="chain" id="PRO_1000020523" description="Threonine--tRNA ligase">
    <location>
        <begin position="1"/>
        <end position="614"/>
    </location>
</feature>
<feature type="region of interest" description="Editing domain" evidence="1">
    <location>
        <begin position="1"/>
        <end position="138"/>
    </location>
</feature>
<feature type="region of interest" description="Catalytic" evidence="1">
    <location>
        <begin position="195"/>
        <end position="492"/>
    </location>
</feature>
<feature type="region of interest" description="Catalytic">
    <location>
        <begin position="196"/>
        <end position="492"/>
    </location>
</feature>
<feature type="binding site" evidence="1">
    <location>
        <position position="289"/>
    </location>
    <ligand>
        <name>Zn(2+)</name>
        <dbReference type="ChEBI" id="CHEBI:29105"/>
    </ligand>
</feature>
<feature type="binding site" evidence="1">
    <location>
        <position position="340"/>
    </location>
    <ligand>
        <name>Zn(2+)</name>
        <dbReference type="ChEBI" id="CHEBI:29105"/>
    </ligand>
</feature>
<feature type="binding site" evidence="1">
    <location>
        <position position="461"/>
    </location>
    <ligand>
        <name>Zn(2+)</name>
        <dbReference type="ChEBI" id="CHEBI:29105"/>
    </ligand>
</feature>
<evidence type="ECO:0000255" key="1">
    <source>
        <dbReference type="HAMAP-Rule" id="MF_00184"/>
    </source>
</evidence>